<sequence length="102" mass="11760">MIHKLTSEERKTRLEGLPHWTAVPGRDAIQRSLRFADFNEAFGFMTRVAIKAQEMNHHPEWFNVYNRVDVTLSTHDADGLTERDIELAQFIDRVCAHTLPAA</sequence>
<comment type="catalytic activity">
    <reaction evidence="1">
        <text>(4aS,6R)-4a-hydroxy-L-erythro-5,6,7,8-tetrahydrobiopterin = (6R)-L-erythro-6,7-dihydrobiopterin + H2O</text>
        <dbReference type="Rhea" id="RHEA:11920"/>
        <dbReference type="ChEBI" id="CHEBI:15377"/>
        <dbReference type="ChEBI" id="CHEBI:15642"/>
        <dbReference type="ChEBI" id="CHEBI:43120"/>
        <dbReference type="EC" id="4.2.1.96"/>
    </reaction>
</comment>
<comment type="similarity">
    <text evidence="1">Belongs to the pterin-4-alpha-carbinolamine dehydratase family.</text>
</comment>
<reference key="1">
    <citation type="submission" date="2007-03" db="EMBL/GenBank/DDBJ databases">
        <title>Complete sequence of chromosome 1 of Burkholderia vietnamiensis G4.</title>
        <authorList>
            <consortium name="US DOE Joint Genome Institute"/>
            <person name="Copeland A."/>
            <person name="Lucas S."/>
            <person name="Lapidus A."/>
            <person name="Barry K."/>
            <person name="Detter J.C."/>
            <person name="Glavina del Rio T."/>
            <person name="Hammon N."/>
            <person name="Israni S."/>
            <person name="Dalin E."/>
            <person name="Tice H."/>
            <person name="Pitluck S."/>
            <person name="Chain P."/>
            <person name="Malfatti S."/>
            <person name="Shin M."/>
            <person name="Vergez L."/>
            <person name="Schmutz J."/>
            <person name="Larimer F."/>
            <person name="Land M."/>
            <person name="Hauser L."/>
            <person name="Kyrpides N."/>
            <person name="Tiedje J."/>
            <person name="Richardson P."/>
        </authorList>
    </citation>
    <scope>NUCLEOTIDE SEQUENCE [LARGE SCALE GENOMIC DNA]</scope>
    <source>
        <strain>G4 / LMG 22486</strain>
    </source>
</reference>
<protein>
    <recommendedName>
        <fullName evidence="1">Putative pterin-4-alpha-carbinolamine dehydratase</fullName>
        <shortName evidence="1">PHS</shortName>
        <ecNumber evidence="1">4.2.1.96</ecNumber>
    </recommendedName>
    <alternativeName>
        <fullName evidence="1">4-alpha-hydroxy-tetrahydropterin dehydratase</fullName>
    </alternativeName>
    <alternativeName>
        <fullName evidence="1">Pterin carbinolamine dehydratase</fullName>
        <shortName evidence="1">PCD</shortName>
    </alternativeName>
</protein>
<dbReference type="EC" id="4.2.1.96" evidence="1"/>
<dbReference type="EMBL" id="CP000614">
    <property type="protein sequence ID" value="ABO53110.1"/>
    <property type="molecule type" value="Genomic_DNA"/>
</dbReference>
<dbReference type="SMR" id="A4JA07"/>
<dbReference type="KEGG" id="bvi:Bcep1808_0087"/>
<dbReference type="eggNOG" id="COG2154">
    <property type="taxonomic scope" value="Bacteria"/>
</dbReference>
<dbReference type="HOGENOM" id="CLU_081974_3_2_4"/>
<dbReference type="Proteomes" id="UP000002287">
    <property type="component" value="Chromosome 1"/>
</dbReference>
<dbReference type="GO" id="GO:0008124">
    <property type="term" value="F:4-alpha-hydroxytetrahydrobiopterin dehydratase activity"/>
    <property type="evidence" value="ECO:0007669"/>
    <property type="project" value="UniProtKB-UniRule"/>
</dbReference>
<dbReference type="GO" id="GO:0006729">
    <property type="term" value="P:tetrahydrobiopterin biosynthetic process"/>
    <property type="evidence" value="ECO:0007669"/>
    <property type="project" value="InterPro"/>
</dbReference>
<dbReference type="CDD" id="cd00914">
    <property type="entry name" value="PCD_DCoH_subfamily_b"/>
    <property type="match status" value="1"/>
</dbReference>
<dbReference type="Gene3D" id="3.30.1360.20">
    <property type="entry name" value="Transcriptional coactivator/pterin dehydratase"/>
    <property type="match status" value="1"/>
</dbReference>
<dbReference type="HAMAP" id="MF_00434">
    <property type="entry name" value="Pterin_4_alpha"/>
    <property type="match status" value="1"/>
</dbReference>
<dbReference type="InterPro" id="IPR036428">
    <property type="entry name" value="PCD_sf"/>
</dbReference>
<dbReference type="InterPro" id="IPR001533">
    <property type="entry name" value="Pterin_deHydtase"/>
</dbReference>
<dbReference type="NCBIfam" id="NF002017">
    <property type="entry name" value="PRK00823.1-2"/>
    <property type="match status" value="1"/>
</dbReference>
<dbReference type="NCBIfam" id="NF002018">
    <property type="entry name" value="PRK00823.1-3"/>
    <property type="match status" value="1"/>
</dbReference>
<dbReference type="NCBIfam" id="NF002020">
    <property type="entry name" value="PRK00823.1-5"/>
    <property type="match status" value="1"/>
</dbReference>
<dbReference type="PANTHER" id="PTHR12599">
    <property type="entry name" value="PTERIN-4-ALPHA-CARBINOLAMINE DEHYDRATASE"/>
    <property type="match status" value="1"/>
</dbReference>
<dbReference type="PANTHER" id="PTHR12599:SF0">
    <property type="entry name" value="PTERIN-4-ALPHA-CARBINOLAMINE DEHYDRATASE"/>
    <property type="match status" value="1"/>
</dbReference>
<dbReference type="Pfam" id="PF01329">
    <property type="entry name" value="Pterin_4a"/>
    <property type="match status" value="1"/>
</dbReference>
<dbReference type="SUPFAM" id="SSF55248">
    <property type="entry name" value="PCD-like"/>
    <property type="match status" value="1"/>
</dbReference>
<evidence type="ECO:0000255" key="1">
    <source>
        <dbReference type="HAMAP-Rule" id="MF_00434"/>
    </source>
</evidence>
<accession>A4JA07</accession>
<keyword id="KW-0456">Lyase</keyword>
<feature type="chain" id="PRO_1000050412" description="Putative pterin-4-alpha-carbinolamine dehydratase">
    <location>
        <begin position="1"/>
        <end position="102"/>
    </location>
</feature>
<gene>
    <name type="ordered locus">Bcep1808_0087</name>
</gene>
<name>PHS_BURVG</name>
<organism>
    <name type="scientific">Burkholderia vietnamiensis (strain G4 / LMG 22486)</name>
    <name type="common">Burkholderia cepacia (strain R1808)</name>
    <dbReference type="NCBI Taxonomy" id="269482"/>
    <lineage>
        <taxon>Bacteria</taxon>
        <taxon>Pseudomonadati</taxon>
        <taxon>Pseudomonadota</taxon>
        <taxon>Betaproteobacteria</taxon>
        <taxon>Burkholderiales</taxon>
        <taxon>Burkholderiaceae</taxon>
        <taxon>Burkholderia</taxon>
        <taxon>Burkholderia cepacia complex</taxon>
    </lineage>
</organism>
<proteinExistence type="inferred from homology"/>